<accession>B2TIF6</accession>
<keyword id="KW-0030">Aminoacyl-tRNA synthetase</keyword>
<keyword id="KW-0067">ATP-binding</keyword>
<keyword id="KW-0963">Cytoplasm</keyword>
<keyword id="KW-0436">Ligase</keyword>
<keyword id="KW-0479">Metal-binding</keyword>
<keyword id="KW-0547">Nucleotide-binding</keyword>
<keyword id="KW-0648">Protein biosynthesis</keyword>
<keyword id="KW-0862">Zinc</keyword>
<protein>
    <recommendedName>
        <fullName evidence="1">Cysteine--tRNA ligase</fullName>
        <ecNumber evidence="1">6.1.1.16</ecNumber>
    </recommendedName>
    <alternativeName>
        <fullName evidence="1">Cysteinyl-tRNA synthetase</fullName>
        <shortName evidence="1">CysRS</shortName>
    </alternativeName>
</protein>
<evidence type="ECO:0000255" key="1">
    <source>
        <dbReference type="HAMAP-Rule" id="MF_00041"/>
    </source>
</evidence>
<proteinExistence type="inferred from homology"/>
<comment type="catalytic activity">
    <reaction evidence="1">
        <text>tRNA(Cys) + L-cysteine + ATP = L-cysteinyl-tRNA(Cys) + AMP + diphosphate</text>
        <dbReference type="Rhea" id="RHEA:17773"/>
        <dbReference type="Rhea" id="RHEA-COMP:9661"/>
        <dbReference type="Rhea" id="RHEA-COMP:9679"/>
        <dbReference type="ChEBI" id="CHEBI:30616"/>
        <dbReference type="ChEBI" id="CHEBI:33019"/>
        <dbReference type="ChEBI" id="CHEBI:35235"/>
        <dbReference type="ChEBI" id="CHEBI:78442"/>
        <dbReference type="ChEBI" id="CHEBI:78517"/>
        <dbReference type="ChEBI" id="CHEBI:456215"/>
        <dbReference type="EC" id="6.1.1.16"/>
    </reaction>
</comment>
<comment type="cofactor">
    <cofactor evidence="1">
        <name>Zn(2+)</name>
        <dbReference type="ChEBI" id="CHEBI:29105"/>
    </cofactor>
    <text evidence="1">Binds 1 zinc ion per subunit.</text>
</comment>
<comment type="subunit">
    <text evidence="1">Monomer.</text>
</comment>
<comment type="subcellular location">
    <subcellularLocation>
        <location evidence="1">Cytoplasm</location>
    </subcellularLocation>
</comment>
<comment type="similarity">
    <text evidence="1">Belongs to the class-I aminoacyl-tRNA synthetase family.</text>
</comment>
<reference key="1">
    <citation type="submission" date="2008-04" db="EMBL/GenBank/DDBJ databases">
        <title>Complete sequence of Clostridium botulinum strain Eklund.</title>
        <authorList>
            <person name="Brinkac L.M."/>
            <person name="Brown J.L."/>
            <person name="Bruce D."/>
            <person name="Detter C."/>
            <person name="Munk C."/>
            <person name="Smith L.A."/>
            <person name="Smith T.J."/>
            <person name="Sutton G."/>
            <person name="Brettin T.S."/>
        </authorList>
    </citation>
    <scope>NUCLEOTIDE SEQUENCE [LARGE SCALE GENOMIC DNA]</scope>
    <source>
        <strain>Eklund 17B / Type B</strain>
    </source>
</reference>
<gene>
    <name evidence="1" type="primary">cysS</name>
    <name type="ordered locus">CLL_A0218</name>
</gene>
<name>SYC_CLOBB</name>
<sequence>MRIFNTLTRKKEEFIPITPGEVKMYVCGPTVYNFFHIGNGRTFIVFDTIRRYLEYRGYEVKFVQNFTDIDDKMIKKANEEGTTVKEIGDKYIKEYYEDADKLQIERATVNPRATEYIEDIIDFVAQLIEKGYAYEVEGDVYFNTKKFNDYGKLSGQSIEDLQMGASNRTSSIADERKNDPMDFAIWKAQKPGEPAWKCPWGMGRPGWHIECSCMAKKILGDTIDIHAGGMDLTFPHHENEVAQSEALTGMRFANYWMHSAYVNINNQKMSKSLNNFFTARDILKEYDSDVVRFFMMSAHYRLQINFSKDLLDSAKASVERLYNAIGNLENLIDEVSRENISEEEVNYLNSLKKYREKYIEKMDDDFNTADALTVLFELTKDTNTNINVNSSKELVNKALNLIRELGAPLGLLQKITKGSLEDEIESLIQQRQDARKNKDFALSDKIRDDLKDRGIVLEDTPQGVRWKKIN</sequence>
<dbReference type="EC" id="6.1.1.16" evidence="1"/>
<dbReference type="EMBL" id="CP001056">
    <property type="protein sequence ID" value="ACD21855.1"/>
    <property type="molecule type" value="Genomic_DNA"/>
</dbReference>
<dbReference type="SMR" id="B2TIF6"/>
<dbReference type="KEGG" id="cbk:CLL_A0218"/>
<dbReference type="PATRIC" id="fig|935198.13.peg.192"/>
<dbReference type="HOGENOM" id="CLU_013528_0_1_9"/>
<dbReference type="Proteomes" id="UP000001195">
    <property type="component" value="Chromosome"/>
</dbReference>
<dbReference type="GO" id="GO:0005829">
    <property type="term" value="C:cytosol"/>
    <property type="evidence" value="ECO:0007669"/>
    <property type="project" value="TreeGrafter"/>
</dbReference>
<dbReference type="GO" id="GO:0005524">
    <property type="term" value="F:ATP binding"/>
    <property type="evidence" value="ECO:0007669"/>
    <property type="project" value="UniProtKB-UniRule"/>
</dbReference>
<dbReference type="GO" id="GO:0004817">
    <property type="term" value="F:cysteine-tRNA ligase activity"/>
    <property type="evidence" value="ECO:0007669"/>
    <property type="project" value="UniProtKB-UniRule"/>
</dbReference>
<dbReference type="GO" id="GO:0008270">
    <property type="term" value="F:zinc ion binding"/>
    <property type="evidence" value="ECO:0007669"/>
    <property type="project" value="UniProtKB-UniRule"/>
</dbReference>
<dbReference type="GO" id="GO:0006423">
    <property type="term" value="P:cysteinyl-tRNA aminoacylation"/>
    <property type="evidence" value="ECO:0007669"/>
    <property type="project" value="UniProtKB-UniRule"/>
</dbReference>
<dbReference type="CDD" id="cd07963">
    <property type="entry name" value="Anticodon_Ia_Cys"/>
    <property type="match status" value="1"/>
</dbReference>
<dbReference type="CDD" id="cd00672">
    <property type="entry name" value="CysRS_core"/>
    <property type="match status" value="1"/>
</dbReference>
<dbReference type="FunFam" id="3.40.50.620:FF:000009">
    <property type="entry name" value="Cysteine--tRNA ligase"/>
    <property type="match status" value="1"/>
</dbReference>
<dbReference type="Gene3D" id="1.20.120.1910">
    <property type="entry name" value="Cysteine-tRNA ligase, C-terminal anti-codon recognition domain"/>
    <property type="match status" value="1"/>
</dbReference>
<dbReference type="Gene3D" id="3.40.50.620">
    <property type="entry name" value="HUPs"/>
    <property type="match status" value="1"/>
</dbReference>
<dbReference type="HAMAP" id="MF_00041">
    <property type="entry name" value="Cys_tRNA_synth"/>
    <property type="match status" value="1"/>
</dbReference>
<dbReference type="InterPro" id="IPR015803">
    <property type="entry name" value="Cys-tRNA-ligase"/>
</dbReference>
<dbReference type="InterPro" id="IPR015273">
    <property type="entry name" value="Cys-tRNA-synt_Ia_DALR"/>
</dbReference>
<dbReference type="InterPro" id="IPR024909">
    <property type="entry name" value="Cys-tRNA/MSH_ligase"/>
</dbReference>
<dbReference type="InterPro" id="IPR056411">
    <property type="entry name" value="CysS_C"/>
</dbReference>
<dbReference type="InterPro" id="IPR014729">
    <property type="entry name" value="Rossmann-like_a/b/a_fold"/>
</dbReference>
<dbReference type="InterPro" id="IPR032678">
    <property type="entry name" value="tRNA-synt_1_cat_dom"/>
</dbReference>
<dbReference type="InterPro" id="IPR009080">
    <property type="entry name" value="tRNAsynth_Ia_anticodon-bd"/>
</dbReference>
<dbReference type="NCBIfam" id="TIGR00435">
    <property type="entry name" value="cysS"/>
    <property type="match status" value="1"/>
</dbReference>
<dbReference type="PANTHER" id="PTHR10890:SF3">
    <property type="entry name" value="CYSTEINE--TRNA LIGASE, CYTOPLASMIC"/>
    <property type="match status" value="1"/>
</dbReference>
<dbReference type="PANTHER" id="PTHR10890">
    <property type="entry name" value="CYSTEINYL-TRNA SYNTHETASE"/>
    <property type="match status" value="1"/>
</dbReference>
<dbReference type="Pfam" id="PF23493">
    <property type="entry name" value="CysS_C"/>
    <property type="match status" value="1"/>
</dbReference>
<dbReference type="Pfam" id="PF09190">
    <property type="entry name" value="DALR_2"/>
    <property type="match status" value="1"/>
</dbReference>
<dbReference type="Pfam" id="PF01406">
    <property type="entry name" value="tRNA-synt_1e"/>
    <property type="match status" value="1"/>
</dbReference>
<dbReference type="PRINTS" id="PR00983">
    <property type="entry name" value="TRNASYNTHCYS"/>
</dbReference>
<dbReference type="SMART" id="SM00840">
    <property type="entry name" value="DALR_2"/>
    <property type="match status" value="1"/>
</dbReference>
<dbReference type="SUPFAM" id="SSF47323">
    <property type="entry name" value="Anticodon-binding domain of a subclass of class I aminoacyl-tRNA synthetases"/>
    <property type="match status" value="1"/>
</dbReference>
<dbReference type="SUPFAM" id="SSF52374">
    <property type="entry name" value="Nucleotidylyl transferase"/>
    <property type="match status" value="1"/>
</dbReference>
<feature type="chain" id="PRO_1000090826" description="Cysteine--tRNA ligase">
    <location>
        <begin position="1"/>
        <end position="470"/>
    </location>
</feature>
<feature type="short sequence motif" description="'HIGH' region">
    <location>
        <begin position="29"/>
        <end position="39"/>
    </location>
</feature>
<feature type="short sequence motif" description="'KMSKS' region">
    <location>
        <begin position="268"/>
        <end position="272"/>
    </location>
</feature>
<feature type="binding site" evidence="1">
    <location>
        <position position="27"/>
    </location>
    <ligand>
        <name>Zn(2+)</name>
        <dbReference type="ChEBI" id="CHEBI:29105"/>
    </ligand>
</feature>
<feature type="binding site" evidence="1">
    <location>
        <position position="211"/>
    </location>
    <ligand>
        <name>Zn(2+)</name>
        <dbReference type="ChEBI" id="CHEBI:29105"/>
    </ligand>
</feature>
<feature type="binding site" evidence="1">
    <location>
        <position position="236"/>
    </location>
    <ligand>
        <name>Zn(2+)</name>
        <dbReference type="ChEBI" id="CHEBI:29105"/>
    </ligand>
</feature>
<feature type="binding site" evidence="1">
    <location>
        <position position="240"/>
    </location>
    <ligand>
        <name>Zn(2+)</name>
        <dbReference type="ChEBI" id="CHEBI:29105"/>
    </ligand>
</feature>
<feature type="binding site" evidence="1">
    <location>
        <position position="271"/>
    </location>
    <ligand>
        <name>ATP</name>
        <dbReference type="ChEBI" id="CHEBI:30616"/>
    </ligand>
</feature>
<organism>
    <name type="scientific">Clostridium botulinum (strain Eklund 17B / Type B)</name>
    <dbReference type="NCBI Taxonomy" id="935198"/>
    <lineage>
        <taxon>Bacteria</taxon>
        <taxon>Bacillati</taxon>
        <taxon>Bacillota</taxon>
        <taxon>Clostridia</taxon>
        <taxon>Eubacteriales</taxon>
        <taxon>Clostridiaceae</taxon>
        <taxon>Clostridium</taxon>
    </lineage>
</organism>